<organism>
    <name type="scientific">Aquifex aeolicus (strain VF5)</name>
    <dbReference type="NCBI Taxonomy" id="224324"/>
    <lineage>
        <taxon>Bacteria</taxon>
        <taxon>Pseudomonadati</taxon>
        <taxon>Aquificota</taxon>
        <taxon>Aquificia</taxon>
        <taxon>Aquificales</taxon>
        <taxon>Aquificaceae</taxon>
        <taxon>Aquifex</taxon>
    </lineage>
</organism>
<accession>O66746</accession>
<sequence length="492" mass="55298">MSVVISIDVGTTRVKVIAFSKNGKIVAISDREVSQIYPEPGWVEQDPLELWEAVRKSLSEVIQQVGLKEINSIGITNQRETVILWDKETGRPVYNAILWQDLRTEDICRKLSEYSEYIKENTGLLLHPYFSASKVNWIIENVNGVKKDIERGKVIFGTVDTWILWNLTGGKVHKTEPSNASRTLLFNIKRLEYDDELLKIFRIPKNILPEVNESSSLFGYTDKSITGVEIPITGILGDQQASLFAHGIRELEEVKNTYGTGLFLMLLTGSKPIIPERLLGTVAWVINGKVNYAIEGSVLTGGACIKWLMDRLKLIKQAADTEYLAKSISSNEGVYFVPAFSGLGAPYWDASARGIIIGITGRTRIEHIARAALEAIAYQTRDVIEEMEKETGVKIKILKADGGASQNNFLMQFQADILGIPVERPRHVELTALGAAGIAGIYSGMWKSKEEFIEDTREVELTFSPEMKKEERELYYSKWKDAVKRAMKWSML</sequence>
<proteinExistence type="inferred from homology"/>
<dbReference type="EC" id="2.7.1.30" evidence="1"/>
<dbReference type="EMBL" id="AE000657">
    <property type="protein sequence ID" value="AAC06710.1"/>
    <property type="molecule type" value="Genomic_DNA"/>
</dbReference>
<dbReference type="PIR" id="F70339">
    <property type="entry name" value="F70339"/>
</dbReference>
<dbReference type="RefSeq" id="NP_213306.1">
    <property type="nucleotide sequence ID" value="NC_000918.1"/>
</dbReference>
<dbReference type="RefSeq" id="WP_010880244.1">
    <property type="nucleotide sequence ID" value="NC_000918.1"/>
</dbReference>
<dbReference type="SMR" id="O66746"/>
<dbReference type="FunCoup" id="O66746">
    <property type="interactions" value="354"/>
</dbReference>
<dbReference type="STRING" id="224324.aq_434"/>
<dbReference type="EnsemblBacteria" id="AAC06710">
    <property type="protein sequence ID" value="AAC06710"/>
    <property type="gene ID" value="aq_434"/>
</dbReference>
<dbReference type="KEGG" id="aae:aq_434"/>
<dbReference type="PATRIC" id="fig|224324.8.peg.359"/>
<dbReference type="eggNOG" id="COG0554">
    <property type="taxonomic scope" value="Bacteria"/>
</dbReference>
<dbReference type="HOGENOM" id="CLU_009281_2_3_0"/>
<dbReference type="InParanoid" id="O66746"/>
<dbReference type="OrthoDB" id="39631at2"/>
<dbReference type="UniPathway" id="UPA00618">
    <property type="reaction ID" value="UER00672"/>
</dbReference>
<dbReference type="Proteomes" id="UP000000798">
    <property type="component" value="Chromosome"/>
</dbReference>
<dbReference type="GO" id="GO:0005829">
    <property type="term" value="C:cytosol"/>
    <property type="evidence" value="ECO:0000318"/>
    <property type="project" value="GO_Central"/>
</dbReference>
<dbReference type="GO" id="GO:0005524">
    <property type="term" value="F:ATP binding"/>
    <property type="evidence" value="ECO:0007669"/>
    <property type="project" value="UniProtKB-UniRule"/>
</dbReference>
<dbReference type="GO" id="GO:0004370">
    <property type="term" value="F:glycerol kinase activity"/>
    <property type="evidence" value="ECO:0000250"/>
    <property type="project" value="UniProtKB"/>
</dbReference>
<dbReference type="GO" id="GO:0019563">
    <property type="term" value="P:glycerol catabolic process"/>
    <property type="evidence" value="ECO:0000318"/>
    <property type="project" value="GO_Central"/>
</dbReference>
<dbReference type="GO" id="GO:0006071">
    <property type="term" value="P:glycerol metabolic process"/>
    <property type="evidence" value="ECO:0000250"/>
    <property type="project" value="UniProtKB"/>
</dbReference>
<dbReference type="GO" id="GO:0006072">
    <property type="term" value="P:glycerol-3-phosphate metabolic process"/>
    <property type="evidence" value="ECO:0007669"/>
    <property type="project" value="InterPro"/>
</dbReference>
<dbReference type="CDD" id="cd07786">
    <property type="entry name" value="FGGY_EcGK_like"/>
    <property type="match status" value="1"/>
</dbReference>
<dbReference type="FunFam" id="3.30.420.40:FF:000007">
    <property type="entry name" value="Glycerol kinase"/>
    <property type="match status" value="1"/>
</dbReference>
<dbReference type="FunFam" id="3.30.420.40:FF:000008">
    <property type="entry name" value="Glycerol kinase"/>
    <property type="match status" value="1"/>
</dbReference>
<dbReference type="Gene3D" id="3.30.420.40">
    <property type="match status" value="2"/>
</dbReference>
<dbReference type="HAMAP" id="MF_00186">
    <property type="entry name" value="Glycerol_kin"/>
    <property type="match status" value="1"/>
</dbReference>
<dbReference type="InterPro" id="IPR043129">
    <property type="entry name" value="ATPase_NBD"/>
</dbReference>
<dbReference type="InterPro" id="IPR000577">
    <property type="entry name" value="Carb_kinase_FGGY"/>
</dbReference>
<dbReference type="InterPro" id="IPR018483">
    <property type="entry name" value="Carb_kinase_FGGY_CS"/>
</dbReference>
<dbReference type="InterPro" id="IPR018485">
    <property type="entry name" value="FGGY_C"/>
</dbReference>
<dbReference type="InterPro" id="IPR018484">
    <property type="entry name" value="FGGY_N"/>
</dbReference>
<dbReference type="InterPro" id="IPR005999">
    <property type="entry name" value="Glycerol_kin"/>
</dbReference>
<dbReference type="NCBIfam" id="TIGR01311">
    <property type="entry name" value="glycerol_kin"/>
    <property type="match status" value="1"/>
</dbReference>
<dbReference type="NCBIfam" id="NF000756">
    <property type="entry name" value="PRK00047.1"/>
    <property type="match status" value="1"/>
</dbReference>
<dbReference type="PANTHER" id="PTHR10196:SF69">
    <property type="entry name" value="GLYCEROL KINASE"/>
    <property type="match status" value="1"/>
</dbReference>
<dbReference type="PANTHER" id="PTHR10196">
    <property type="entry name" value="SUGAR KINASE"/>
    <property type="match status" value="1"/>
</dbReference>
<dbReference type="Pfam" id="PF02782">
    <property type="entry name" value="FGGY_C"/>
    <property type="match status" value="1"/>
</dbReference>
<dbReference type="Pfam" id="PF00370">
    <property type="entry name" value="FGGY_N"/>
    <property type="match status" value="1"/>
</dbReference>
<dbReference type="PIRSF" id="PIRSF000538">
    <property type="entry name" value="GlpK"/>
    <property type="match status" value="1"/>
</dbReference>
<dbReference type="SUPFAM" id="SSF53067">
    <property type="entry name" value="Actin-like ATPase domain"/>
    <property type="match status" value="2"/>
</dbReference>
<dbReference type="PROSITE" id="PS00933">
    <property type="entry name" value="FGGY_KINASES_1"/>
    <property type="match status" value="1"/>
</dbReference>
<dbReference type="PROSITE" id="PS00445">
    <property type="entry name" value="FGGY_KINASES_2"/>
    <property type="match status" value="1"/>
</dbReference>
<reference key="1">
    <citation type="journal article" date="1998" name="Nature">
        <title>The complete genome of the hyperthermophilic bacterium Aquifex aeolicus.</title>
        <authorList>
            <person name="Deckert G."/>
            <person name="Warren P.V."/>
            <person name="Gaasterland T."/>
            <person name="Young W.G."/>
            <person name="Lenox A.L."/>
            <person name="Graham D.E."/>
            <person name="Overbeek R."/>
            <person name="Snead M.A."/>
            <person name="Keller M."/>
            <person name="Aujay M."/>
            <person name="Huber R."/>
            <person name="Feldman R.A."/>
            <person name="Short J.M."/>
            <person name="Olsen G.J."/>
            <person name="Swanson R.V."/>
        </authorList>
    </citation>
    <scope>NUCLEOTIDE SEQUENCE [LARGE SCALE GENOMIC DNA]</scope>
    <source>
        <strain>VF5</strain>
    </source>
</reference>
<name>GLPK_AQUAE</name>
<gene>
    <name evidence="1" type="primary">glpK</name>
    <name type="ordered locus">aq_434</name>
</gene>
<keyword id="KW-0067">ATP-binding</keyword>
<keyword id="KW-0319">Glycerol metabolism</keyword>
<keyword id="KW-0418">Kinase</keyword>
<keyword id="KW-0547">Nucleotide-binding</keyword>
<keyword id="KW-1185">Reference proteome</keyword>
<keyword id="KW-0808">Transferase</keyword>
<evidence type="ECO:0000255" key="1">
    <source>
        <dbReference type="HAMAP-Rule" id="MF_00186"/>
    </source>
</evidence>
<comment type="function">
    <text evidence="1">Key enzyme in the regulation of glycerol uptake and metabolism. Catalyzes the phosphorylation of glycerol to yield sn-glycerol 3-phosphate.</text>
</comment>
<comment type="catalytic activity">
    <reaction evidence="1">
        <text>glycerol + ATP = sn-glycerol 3-phosphate + ADP + H(+)</text>
        <dbReference type="Rhea" id="RHEA:21644"/>
        <dbReference type="ChEBI" id="CHEBI:15378"/>
        <dbReference type="ChEBI" id="CHEBI:17754"/>
        <dbReference type="ChEBI" id="CHEBI:30616"/>
        <dbReference type="ChEBI" id="CHEBI:57597"/>
        <dbReference type="ChEBI" id="CHEBI:456216"/>
        <dbReference type="EC" id="2.7.1.30"/>
    </reaction>
</comment>
<comment type="activity regulation">
    <text evidence="1">Inhibited by fructose 1,6-bisphosphate (FBP).</text>
</comment>
<comment type="pathway">
    <text evidence="1">Polyol metabolism; glycerol degradation via glycerol kinase pathway; sn-glycerol 3-phosphate from glycerol: step 1/1.</text>
</comment>
<comment type="similarity">
    <text evidence="1">Belongs to the FGGY kinase family.</text>
</comment>
<protein>
    <recommendedName>
        <fullName evidence="1">Glycerol kinase</fullName>
        <ecNumber evidence="1">2.7.1.30</ecNumber>
    </recommendedName>
    <alternativeName>
        <fullName evidence="1">ATP:glycerol 3-phosphotransferase</fullName>
    </alternativeName>
    <alternativeName>
        <fullName evidence="1">Glycerokinase</fullName>
        <shortName evidence="1">GK</shortName>
    </alternativeName>
</protein>
<feature type="chain" id="PRO_0000059430" description="Glycerol kinase">
    <location>
        <begin position="1"/>
        <end position="492"/>
    </location>
</feature>
<feature type="binding site" evidence="1">
    <location>
        <position position="11"/>
    </location>
    <ligand>
        <name>ADP</name>
        <dbReference type="ChEBI" id="CHEBI:456216"/>
    </ligand>
</feature>
<feature type="binding site" evidence="1">
    <location>
        <position position="11"/>
    </location>
    <ligand>
        <name>ATP</name>
        <dbReference type="ChEBI" id="CHEBI:30616"/>
    </ligand>
</feature>
<feature type="binding site" evidence="1">
    <location>
        <position position="11"/>
    </location>
    <ligand>
        <name>sn-glycerol 3-phosphate</name>
        <dbReference type="ChEBI" id="CHEBI:57597"/>
    </ligand>
</feature>
<feature type="binding site" evidence="1">
    <location>
        <position position="12"/>
    </location>
    <ligand>
        <name>ATP</name>
        <dbReference type="ChEBI" id="CHEBI:30616"/>
    </ligand>
</feature>
<feature type="binding site" evidence="1">
    <location>
        <position position="15"/>
    </location>
    <ligand>
        <name>ADP</name>
        <dbReference type="ChEBI" id="CHEBI:456216"/>
    </ligand>
</feature>
<feature type="binding site" evidence="1">
    <location>
        <position position="79"/>
    </location>
    <ligand>
        <name>glycerol</name>
        <dbReference type="ChEBI" id="CHEBI:17754"/>
    </ligand>
</feature>
<feature type="binding site" evidence="1">
    <location>
        <position position="79"/>
    </location>
    <ligand>
        <name>sn-glycerol 3-phosphate</name>
        <dbReference type="ChEBI" id="CHEBI:57597"/>
    </ligand>
</feature>
<feature type="binding site" evidence="1">
    <location>
        <position position="80"/>
    </location>
    <ligand>
        <name>glycerol</name>
        <dbReference type="ChEBI" id="CHEBI:17754"/>
    </ligand>
</feature>
<feature type="binding site" evidence="1">
    <location>
        <position position="80"/>
    </location>
    <ligand>
        <name>sn-glycerol 3-phosphate</name>
        <dbReference type="ChEBI" id="CHEBI:57597"/>
    </ligand>
</feature>
<feature type="binding site" evidence="1">
    <location>
        <position position="129"/>
    </location>
    <ligand>
        <name>glycerol</name>
        <dbReference type="ChEBI" id="CHEBI:17754"/>
    </ligand>
</feature>
<feature type="binding site" evidence="1">
    <location>
        <position position="129"/>
    </location>
    <ligand>
        <name>sn-glycerol 3-phosphate</name>
        <dbReference type="ChEBI" id="CHEBI:57597"/>
    </ligand>
</feature>
<feature type="binding site" evidence="1">
    <location>
        <position position="238"/>
    </location>
    <ligand>
        <name>glycerol</name>
        <dbReference type="ChEBI" id="CHEBI:17754"/>
    </ligand>
</feature>
<feature type="binding site" evidence="1">
    <location>
        <position position="238"/>
    </location>
    <ligand>
        <name>sn-glycerol 3-phosphate</name>
        <dbReference type="ChEBI" id="CHEBI:57597"/>
    </ligand>
</feature>
<feature type="binding site" evidence="1">
    <location>
        <position position="239"/>
    </location>
    <ligand>
        <name>glycerol</name>
        <dbReference type="ChEBI" id="CHEBI:17754"/>
    </ligand>
</feature>
<feature type="binding site" evidence="1">
    <location>
        <position position="260"/>
    </location>
    <ligand>
        <name>ADP</name>
        <dbReference type="ChEBI" id="CHEBI:456216"/>
    </ligand>
</feature>
<feature type="binding site" evidence="1">
    <location>
        <position position="260"/>
    </location>
    <ligand>
        <name>ATP</name>
        <dbReference type="ChEBI" id="CHEBI:30616"/>
    </ligand>
</feature>
<feature type="binding site" evidence="1">
    <location>
        <position position="302"/>
    </location>
    <ligand>
        <name>ADP</name>
        <dbReference type="ChEBI" id="CHEBI:456216"/>
    </ligand>
</feature>
<feature type="binding site" evidence="1">
    <location>
        <position position="302"/>
    </location>
    <ligand>
        <name>ATP</name>
        <dbReference type="ChEBI" id="CHEBI:30616"/>
    </ligand>
</feature>
<feature type="binding site" evidence="1">
    <location>
        <position position="403"/>
    </location>
    <ligand>
        <name>ADP</name>
        <dbReference type="ChEBI" id="CHEBI:456216"/>
    </ligand>
</feature>
<feature type="binding site" evidence="1">
    <location>
        <position position="403"/>
    </location>
    <ligand>
        <name>ATP</name>
        <dbReference type="ChEBI" id="CHEBI:30616"/>
    </ligand>
</feature>
<feature type="binding site" evidence="1">
    <location>
        <position position="407"/>
    </location>
    <ligand>
        <name>ADP</name>
        <dbReference type="ChEBI" id="CHEBI:456216"/>
    </ligand>
</feature>